<dbReference type="EMBL" id="Z00044">
    <property type="protein sequence ID" value="CAA77344.1"/>
    <property type="molecule type" value="Genomic_DNA"/>
</dbReference>
<dbReference type="PIR" id="A01057">
    <property type="entry name" value="LWNT6"/>
</dbReference>
<dbReference type="RefSeq" id="NP_054484.1">
    <property type="nucleotide sequence ID" value="NC_001879.2"/>
</dbReference>
<dbReference type="SMR" id="P69372"/>
<dbReference type="GeneID" id="800497"/>
<dbReference type="KEGG" id="nta:800497"/>
<dbReference type="OMA" id="GFFWAAF"/>
<dbReference type="OrthoDB" id="2303at2759"/>
<dbReference type="Proteomes" id="UP000084051">
    <property type="component" value="Unplaced"/>
</dbReference>
<dbReference type="GO" id="GO:0009535">
    <property type="term" value="C:chloroplast thylakoid membrane"/>
    <property type="evidence" value="ECO:0007669"/>
    <property type="project" value="UniProtKB-SubCell"/>
</dbReference>
<dbReference type="GO" id="GO:0005886">
    <property type="term" value="C:plasma membrane"/>
    <property type="evidence" value="ECO:0007669"/>
    <property type="project" value="UniProtKB-UniRule"/>
</dbReference>
<dbReference type="GO" id="GO:0045259">
    <property type="term" value="C:proton-transporting ATP synthase complex"/>
    <property type="evidence" value="ECO:0007669"/>
    <property type="project" value="UniProtKB-KW"/>
</dbReference>
<dbReference type="GO" id="GO:0046933">
    <property type="term" value="F:proton-transporting ATP synthase activity, rotational mechanism"/>
    <property type="evidence" value="ECO:0007669"/>
    <property type="project" value="UniProtKB-UniRule"/>
</dbReference>
<dbReference type="CDD" id="cd00310">
    <property type="entry name" value="ATP-synt_Fo_a_6"/>
    <property type="match status" value="1"/>
</dbReference>
<dbReference type="FunFam" id="1.20.120.220:FF:000001">
    <property type="entry name" value="ATP synthase subunit a, chloroplastic"/>
    <property type="match status" value="1"/>
</dbReference>
<dbReference type="Gene3D" id="1.20.120.220">
    <property type="entry name" value="ATP synthase, F0 complex, subunit A"/>
    <property type="match status" value="1"/>
</dbReference>
<dbReference type="HAMAP" id="MF_01393">
    <property type="entry name" value="ATP_synth_a_bact"/>
    <property type="match status" value="1"/>
</dbReference>
<dbReference type="InterPro" id="IPR045082">
    <property type="entry name" value="ATP_syn_F0_a_bact/chloroplast"/>
</dbReference>
<dbReference type="InterPro" id="IPR000568">
    <property type="entry name" value="ATP_synth_F0_asu"/>
</dbReference>
<dbReference type="InterPro" id="IPR023011">
    <property type="entry name" value="ATP_synth_F0_asu_AS"/>
</dbReference>
<dbReference type="InterPro" id="IPR035908">
    <property type="entry name" value="F0_ATP_A_sf"/>
</dbReference>
<dbReference type="NCBIfam" id="TIGR01131">
    <property type="entry name" value="ATP_synt_6_or_A"/>
    <property type="match status" value="1"/>
</dbReference>
<dbReference type="PANTHER" id="PTHR42823">
    <property type="entry name" value="ATP SYNTHASE SUBUNIT A, CHLOROPLASTIC"/>
    <property type="match status" value="1"/>
</dbReference>
<dbReference type="PANTHER" id="PTHR42823:SF3">
    <property type="entry name" value="ATP SYNTHASE SUBUNIT A, CHLOROPLASTIC"/>
    <property type="match status" value="1"/>
</dbReference>
<dbReference type="Pfam" id="PF00119">
    <property type="entry name" value="ATP-synt_A"/>
    <property type="match status" value="1"/>
</dbReference>
<dbReference type="PRINTS" id="PR00123">
    <property type="entry name" value="ATPASEA"/>
</dbReference>
<dbReference type="SUPFAM" id="SSF81336">
    <property type="entry name" value="F1F0 ATP synthase subunit A"/>
    <property type="match status" value="1"/>
</dbReference>
<dbReference type="PROSITE" id="PS00449">
    <property type="entry name" value="ATPASE_A"/>
    <property type="match status" value="1"/>
</dbReference>
<feature type="chain" id="PRO_0000002600" description="ATP synthase subunit a, chloroplastic">
    <location>
        <begin position="1"/>
        <end position="247"/>
    </location>
</feature>
<feature type="transmembrane region" description="Helical" evidence="1">
    <location>
        <begin position="38"/>
        <end position="58"/>
    </location>
</feature>
<feature type="transmembrane region" description="Helical" evidence="1">
    <location>
        <begin position="95"/>
        <end position="115"/>
    </location>
</feature>
<feature type="transmembrane region" description="Helical" evidence="1">
    <location>
        <begin position="134"/>
        <end position="154"/>
    </location>
</feature>
<feature type="transmembrane region" description="Helical" evidence="1">
    <location>
        <begin position="199"/>
        <end position="219"/>
    </location>
</feature>
<feature type="transmembrane region" description="Helical" evidence="1">
    <location>
        <begin position="220"/>
        <end position="240"/>
    </location>
</feature>
<accession>P69372</accession>
<accession>P06288</accession>
<sequence>MNVLSCSINTLKGLYDISGVEVGQHFYWQIGGFQVHGQVLITSWVVIAILLGSATIAVRNPQTIPTGGQNFFEYVLEFIRDVSKTQIGEEYGPWVPFIGTMFLFIFVSNWSGALLPWKIIQLPHGELAAPTNDINTTVALALLTSVAYFYAGLTKKGLGYFGKYIQPTPILLPINILEDFTKPLSLSFRLFGNILADELVVVVLVSLVPLVVPIPVMLLGLFTSGIQALIFATLAAAYIGESMEGHH</sequence>
<protein>
    <recommendedName>
        <fullName evidence="1">ATP synthase subunit a, chloroplastic</fullName>
    </recommendedName>
    <alternativeName>
        <fullName evidence="1">ATP synthase F0 sector subunit a</fullName>
    </alternativeName>
    <alternativeName>
        <fullName evidence="1">F-ATPase subunit IV</fullName>
    </alternativeName>
</protein>
<organism>
    <name type="scientific">Nicotiana tabacum</name>
    <name type="common">Common tobacco</name>
    <dbReference type="NCBI Taxonomy" id="4097"/>
    <lineage>
        <taxon>Eukaryota</taxon>
        <taxon>Viridiplantae</taxon>
        <taxon>Streptophyta</taxon>
        <taxon>Embryophyta</taxon>
        <taxon>Tracheophyta</taxon>
        <taxon>Spermatophyta</taxon>
        <taxon>Magnoliopsida</taxon>
        <taxon>eudicotyledons</taxon>
        <taxon>Gunneridae</taxon>
        <taxon>Pentapetalae</taxon>
        <taxon>asterids</taxon>
        <taxon>lamiids</taxon>
        <taxon>Solanales</taxon>
        <taxon>Solanaceae</taxon>
        <taxon>Nicotianoideae</taxon>
        <taxon>Nicotianeae</taxon>
        <taxon>Nicotiana</taxon>
    </lineage>
</organism>
<comment type="function">
    <text evidence="1">Key component of the proton channel; it plays a direct role in the translocation of protons across the membrane.</text>
</comment>
<comment type="subunit">
    <text evidence="1">F-type ATPases have 2 components, CF(1) - the catalytic core - and CF(0) - the membrane proton channel. CF(1) has five subunits: alpha(3), beta(3), gamma(1), delta(1), epsilon(1). CF(0) has four main subunits: a, b, b' and c.</text>
</comment>
<comment type="subcellular location">
    <subcellularLocation>
        <location evidence="1">Plastid</location>
        <location evidence="1">Chloroplast thylakoid membrane</location>
        <topology evidence="1">Multi-pass membrane protein</topology>
    </subcellularLocation>
</comment>
<comment type="similarity">
    <text evidence="1">Belongs to the ATPase A chain family.</text>
</comment>
<reference key="1">
    <citation type="journal article" date="1986" name="EMBO J.">
        <title>The complete nucleotide sequence of the tobacco chloroplast genome: its gene organization and expression.</title>
        <authorList>
            <person name="Shinozaki K."/>
            <person name="Ohme M."/>
            <person name="Tanaka M."/>
            <person name="Wakasugi T."/>
            <person name="Hayashida N."/>
            <person name="Matsubayashi T."/>
            <person name="Zaita N."/>
            <person name="Chunwongse J."/>
            <person name="Obokata J."/>
            <person name="Yamaguchi-Shinozaki K."/>
            <person name="Ohto C."/>
            <person name="Torazawa K."/>
            <person name="Meng B.-Y."/>
            <person name="Sugita M."/>
            <person name="Deno H."/>
            <person name="Kamogashira T."/>
            <person name="Yamada K."/>
            <person name="Kusuda J."/>
            <person name="Takaiwa F."/>
            <person name="Kato A."/>
            <person name="Tohdoh N."/>
            <person name="Shimada H."/>
            <person name="Sugiura M."/>
        </authorList>
    </citation>
    <scope>NUCLEOTIDE SEQUENCE [LARGE SCALE GENOMIC DNA]</scope>
    <source>
        <strain>cv. Bright Yellow 4</strain>
    </source>
</reference>
<geneLocation type="chloroplast"/>
<keyword id="KW-0066">ATP synthesis</keyword>
<keyword id="KW-0138">CF(0)</keyword>
<keyword id="KW-0150">Chloroplast</keyword>
<keyword id="KW-0375">Hydrogen ion transport</keyword>
<keyword id="KW-0406">Ion transport</keyword>
<keyword id="KW-0472">Membrane</keyword>
<keyword id="KW-0934">Plastid</keyword>
<keyword id="KW-1185">Reference proteome</keyword>
<keyword id="KW-0793">Thylakoid</keyword>
<keyword id="KW-0812">Transmembrane</keyword>
<keyword id="KW-1133">Transmembrane helix</keyword>
<keyword id="KW-0813">Transport</keyword>
<proteinExistence type="inferred from homology"/>
<evidence type="ECO:0000255" key="1">
    <source>
        <dbReference type="HAMAP-Rule" id="MF_01393"/>
    </source>
</evidence>
<name>ATPI_TOBAC</name>
<gene>
    <name evidence="1" type="primary">atpI</name>
</gene>